<dbReference type="EMBL" id="AAFI02000104">
    <property type="protein sequence ID" value="EAL63560.1"/>
    <property type="molecule type" value="Genomic_DNA"/>
</dbReference>
<dbReference type="RefSeq" id="XP_637082.1">
    <property type="nucleotide sequence ID" value="XM_631990.1"/>
</dbReference>
<dbReference type="SMR" id="Q54JS0"/>
<dbReference type="FunCoup" id="Q54JS0">
    <property type="interactions" value="455"/>
</dbReference>
<dbReference type="STRING" id="44689.Q54JS0"/>
<dbReference type="PaxDb" id="44689-DDB0237718"/>
<dbReference type="EnsemblProtists" id="EAL63560">
    <property type="protein sequence ID" value="EAL63560"/>
    <property type="gene ID" value="DDB_G0287827"/>
</dbReference>
<dbReference type="GeneID" id="8626337"/>
<dbReference type="KEGG" id="ddi:DDB_G0287827"/>
<dbReference type="dictyBase" id="DDB_G0287827">
    <property type="gene designation" value="pfdn1"/>
</dbReference>
<dbReference type="VEuPathDB" id="AmoebaDB:DDB_G0287827"/>
<dbReference type="eggNOG" id="ENOG502RCN9">
    <property type="taxonomic scope" value="Eukaryota"/>
</dbReference>
<dbReference type="HOGENOM" id="CLU_122140_0_1_1"/>
<dbReference type="InParanoid" id="Q54JS0"/>
<dbReference type="OMA" id="REMIQQK"/>
<dbReference type="PhylomeDB" id="Q54JS0"/>
<dbReference type="PRO" id="PR:Q54JS0"/>
<dbReference type="Proteomes" id="UP000002195">
    <property type="component" value="Chromosome 5"/>
</dbReference>
<dbReference type="GO" id="GO:0005737">
    <property type="term" value="C:cytoplasm"/>
    <property type="evidence" value="ECO:0000318"/>
    <property type="project" value="GO_Central"/>
</dbReference>
<dbReference type="GO" id="GO:0016272">
    <property type="term" value="C:prefoldin complex"/>
    <property type="evidence" value="ECO:0007669"/>
    <property type="project" value="InterPro"/>
</dbReference>
<dbReference type="GO" id="GO:0044183">
    <property type="term" value="F:protein folding chaperone"/>
    <property type="evidence" value="ECO:0000318"/>
    <property type="project" value="GO_Central"/>
</dbReference>
<dbReference type="GO" id="GO:0051082">
    <property type="term" value="F:unfolded protein binding"/>
    <property type="evidence" value="ECO:0000318"/>
    <property type="project" value="GO_Central"/>
</dbReference>
<dbReference type="GO" id="GO:0006457">
    <property type="term" value="P:protein folding"/>
    <property type="evidence" value="ECO:0000318"/>
    <property type="project" value="GO_Central"/>
</dbReference>
<dbReference type="Gene3D" id="1.10.287.370">
    <property type="match status" value="1"/>
</dbReference>
<dbReference type="InterPro" id="IPR002777">
    <property type="entry name" value="PFD_beta-like"/>
</dbReference>
<dbReference type="InterPro" id="IPR009053">
    <property type="entry name" value="Prefoldin"/>
</dbReference>
<dbReference type="PANTHER" id="PTHR20903:SF0">
    <property type="entry name" value="PREFOLDIN SUBUNIT 1"/>
    <property type="match status" value="1"/>
</dbReference>
<dbReference type="PANTHER" id="PTHR20903">
    <property type="entry name" value="PREFOLDIN SUBUNIT 1-RELATED"/>
    <property type="match status" value="1"/>
</dbReference>
<dbReference type="Pfam" id="PF01920">
    <property type="entry name" value="Prefoldin_2"/>
    <property type="match status" value="1"/>
</dbReference>
<dbReference type="SUPFAM" id="SSF46579">
    <property type="entry name" value="Prefoldin"/>
    <property type="match status" value="1"/>
</dbReference>
<feature type="chain" id="PRO_0000327888" description="Probable prefoldin subunit 1">
    <location>
        <begin position="1"/>
        <end position="115"/>
    </location>
</feature>
<keyword id="KW-0143">Chaperone</keyword>
<keyword id="KW-1185">Reference proteome</keyword>
<accession>Q54JS0</accession>
<evidence type="ECO:0000250" key="1"/>
<evidence type="ECO:0000305" key="2"/>
<proteinExistence type="inferred from homology"/>
<gene>
    <name type="primary">pfdn1</name>
    <name type="ORF">DDB_G0287827</name>
</gene>
<organism>
    <name type="scientific">Dictyostelium discoideum</name>
    <name type="common">Social amoeba</name>
    <dbReference type="NCBI Taxonomy" id="44689"/>
    <lineage>
        <taxon>Eukaryota</taxon>
        <taxon>Amoebozoa</taxon>
        <taxon>Evosea</taxon>
        <taxon>Eumycetozoa</taxon>
        <taxon>Dictyostelia</taxon>
        <taxon>Dictyosteliales</taxon>
        <taxon>Dictyosteliaceae</taxon>
        <taxon>Dictyostelium</taxon>
    </lineage>
</organism>
<sequence length="115" mass="13429">MEILDKQAFFETREKLYTLSRSLNIIKQRIQIAENDRKKCLITINELESLSSETKTYKAVGKMFVISPMTSLKTELKQQVQKDEEDVKGLINQSKYIDAQITDTERSLNELVRKK</sequence>
<reference key="1">
    <citation type="journal article" date="2005" name="Nature">
        <title>The genome of the social amoeba Dictyostelium discoideum.</title>
        <authorList>
            <person name="Eichinger L."/>
            <person name="Pachebat J.A."/>
            <person name="Gloeckner G."/>
            <person name="Rajandream M.A."/>
            <person name="Sucgang R."/>
            <person name="Berriman M."/>
            <person name="Song J."/>
            <person name="Olsen R."/>
            <person name="Szafranski K."/>
            <person name="Xu Q."/>
            <person name="Tunggal B."/>
            <person name="Kummerfeld S."/>
            <person name="Madera M."/>
            <person name="Konfortov B.A."/>
            <person name="Rivero F."/>
            <person name="Bankier A.T."/>
            <person name="Lehmann R."/>
            <person name="Hamlin N."/>
            <person name="Davies R."/>
            <person name="Gaudet P."/>
            <person name="Fey P."/>
            <person name="Pilcher K."/>
            <person name="Chen G."/>
            <person name="Saunders D."/>
            <person name="Sodergren E.J."/>
            <person name="Davis P."/>
            <person name="Kerhornou A."/>
            <person name="Nie X."/>
            <person name="Hall N."/>
            <person name="Anjard C."/>
            <person name="Hemphill L."/>
            <person name="Bason N."/>
            <person name="Farbrother P."/>
            <person name="Desany B."/>
            <person name="Just E."/>
            <person name="Morio T."/>
            <person name="Rost R."/>
            <person name="Churcher C.M."/>
            <person name="Cooper J."/>
            <person name="Haydock S."/>
            <person name="van Driessche N."/>
            <person name="Cronin A."/>
            <person name="Goodhead I."/>
            <person name="Muzny D.M."/>
            <person name="Mourier T."/>
            <person name="Pain A."/>
            <person name="Lu M."/>
            <person name="Harper D."/>
            <person name="Lindsay R."/>
            <person name="Hauser H."/>
            <person name="James K.D."/>
            <person name="Quiles M."/>
            <person name="Madan Babu M."/>
            <person name="Saito T."/>
            <person name="Buchrieser C."/>
            <person name="Wardroper A."/>
            <person name="Felder M."/>
            <person name="Thangavelu M."/>
            <person name="Johnson D."/>
            <person name="Knights A."/>
            <person name="Loulseged H."/>
            <person name="Mungall K.L."/>
            <person name="Oliver K."/>
            <person name="Price C."/>
            <person name="Quail M.A."/>
            <person name="Urushihara H."/>
            <person name="Hernandez J."/>
            <person name="Rabbinowitsch E."/>
            <person name="Steffen D."/>
            <person name="Sanders M."/>
            <person name="Ma J."/>
            <person name="Kohara Y."/>
            <person name="Sharp S."/>
            <person name="Simmonds M.N."/>
            <person name="Spiegler S."/>
            <person name="Tivey A."/>
            <person name="Sugano S."/>
            <person name="White B."/>
            <person name="Walker D."/>
            <person name="Woodward J.R."/>
            <person name="Winckler T."/>
            <person name="Tanaka Y."/>
            <person name="Shaulsky G."/>
            <person name="Schleicher M."/>
            <person name="Weinstock G.M."/>
            <person name="Rosenthal A."/>
            <person name="Cox E.C."/>
            <person name="Chisholm R.L."/>
            <person name="Gibbs R.A."/>
            <person name="Loomis W.F."/>
            <person name="Platzer M."/>
            <person name="Kay R.R."/>
            <person name="Williams J.G."/>
            <person name="Dear P.H."/>
            <person name="Noegel A.A."/>
            <person name="Barrell B.G."/>
            <person name="Kuspa A."/>
        </authorList>
    </citation>
    <scope>NUCLEOTIDE SEQUENCE [LARGE SCALE GENOMIC DNA]</scope>
    <source>
        <strain>AX4</strain>
    </source>
</reference>
<protein>
    <recommendedName>
        <fullName>Probable prefoldin subunit 1</fullName>
    </recommendedName>
</protein>
<name>PFD1_DICDI</name>
<comment type="function">
    <text evidence="1">Binds specifically to cytosolic chaperonin (c-CPN) and transfers target proteins to it. Binds to nascent polypeptide chain and promotes folding in an environment in which there are many competing pathways for nonnative proteins (By similarity).</text>
</comment>
<comment type="subunit">
    <text evidence="1">Heterohexamer of two PFD-alpha type and four PFD-beta type subunits.</text>
</comment>
<comment type="similarity">
    <text evidence="2">Belongs to the prefoldin subunit beta family.</text>
</comment>